<accession>A4GAI1</accession>
<dbReference type="EC" id="2.1.1.170" evidence="1"/>
<dbReference type="EMBL" id="CU207211">
    <property type="protein sequence ID" value="CAL63518.1"/>
    <property type="molecule type" value="Genomic_DNA"/>
</dbReference>
<dbReference type="SMR" id="A4GAI1"/>
<dbReference type="STRING" id="204773.HEAR3417"/>
<dbReference type="KEGG" id="har:HEAR3417"/>
<dbReference type="eggNOG" id="COG0357">
    <property type="taxonomic scope" value="Bacteria"/>
</dbReference>
<dbReference type="HOGENOM" id="CLU_065341_2_0_4"/>
<dbReference type="OrthoDB" id="9808773at2"/>
<dbReference type="Proteomes" id="UP000006697">
    <property type="component" value="Chromosome"/>
</dbReference>
<dbReference type="GO" id="GO:0005829">
    <property type="term" value="C:cytosol"/>
    <property type="evidence" value="ECO:0007669"/>
    <property type="project" value="TreeGrafter"/>
</dbReference>
<dbReference type="GO" id="GO:0070043">
    <property type="term" value="F:rRNA (guanine-N7-)-methyltransferase activity"/>
    <property type="evidence" value="ECO:0007669"/>
    <property type="project" value="UniProtKB-UniRule"/>
</dbReference>
<dbReference type="CDD" id="cd02440">
    <property type="entry name" value="AdoMet_MTases"/>
    <property type="match status" value="1"/>
</dbReference>
<dbReference type="Gene3D" id="3.40.50.150">
    <property type="entry name" value="Vaccinia Virus protein VP39"/>
    <property type="match status" value="1"/>
</dbReference>
<dbReference type="HAMAP" id="MF_00074">
    <property type="entry name" value="16SrRNA_methyltr_G"/>
    <property type="match status" value="1"/>
</dbReference>
<dbReference type="InterPro" id="IPR003682">
    <property type="entry name" value="rRNA_ssu_MeTfrase_G"/>
</dbReference>
<dbReference type="InterPro" id="IPR029063">
    <property type="entry name" value="SAM-dependent_MTases_sf"/>
</dbReference>
<dbReference type="NCBIfam" id="TIGR00138">
    <property type="entry name" value="rsmG_gidB"/>
    <property type="match status" value="1"/>
</dbReference>
<dbReference type="PANTHER" id="PTHR31760">
    <property type="entry name" value="S-ADENOSYL-L-METHIONINE-DEPENDENT METHYLTRANSFERASES SUPERFAMILY PROTEIN"/>
    <property type="match status" value="1"/>
</dbReference>
<dbReference type="PANTHER" id="PTHR31760:SF0">
    <property type="entry name" value="S-ADENOSYL-L-METHIONINE-DEPENDENT METHYLTRANSFERASES SUPERFAMILY PROTEIN"/>
    <property type="match status" value="1"/>
</dbReference>
<dbReference type="Pfam" id="PF02527">
    <property type="entry name" value="GidB"/>
    <property type="match status" value="1"/>
</dbReference>
<dbReference type="PIRSF" id="PIRSF003078">
    <property type="entry name" value="GidB"/>
    <property type="match status" value="1"/>
</dbReference>
<dbReference type="SUPFAM" id="SSF53335">
    <property type="entry name" value="S-adenosyl-L-methionine-dependent methyltransferases"/>
    <property type="match status" value="1"/>
</dbReference>
<name>RSMG_HERAR</name>
<comment type="function">
    <text evidence="1">Specifically methylates the N7 position of guanine in position 527 of 16S rRNA.</text>
</comment>
<comment type="catalytic activity">
    <reaction evidence="1">
        <text>guanosine(527) in 16S rRNA + S-adenosyl-L-methionine = N(7)-methylguanosine(527) in 16S rRNA + S-adenosyl-L-homocysteine</text>
        <dbReference type="Rhea" id="RHEA:42732"/>
        <dbReference type="Rhea" id="RHEA-COMP:10209"/>
        <dbReference type="Rhea" id="RHEA-COMP:10210"/>
        <dbReference type="ChEBI" id="CHEBI:57856"/>
        <dbReference type="ChEBI" id="CHEBI:59789"/>
        <dbReference type="ChEBI" id="CHEBI:74269"/>
        <dbReference type="ChEBI" id="CHEBI:74480"/>
        <dbReference type="EC" id="2.1.1.170"/>
    </reaction>
</comment>
<comment type="subcellular location">
    <subcellularLocation>
        <location evidence="1">Cytoplasm</location>
    </subcellularLocation>
</comment>
<comment type="similarity">
    <text evidence="1">Belongs to the methyltransferase superfamily. RNA methyltransferase RsmG family.</text>
</comment>
<keyword id="KW-0963">Cytoplasm</keyword>
<keyword id="KW-0489">Methyltransferase</keyword>
<keyword id="KW-1185">Reference proteome</keyword>
<keyword id="KW-0698">rRNA processing</keyword>
<keyword id="KW-0949">S-adenosyl-L-methionine</keyword>
<keyword id="KW-0808">Transferase</keyword>
<organism>
    <name type="scientific">Herminiimonas arsenicoxydans</name>
    <dbReference type="NCBI Taxonomy" id="204773"/>
    <lineage>
        <taxon>Bacteria</taxon>
        <taxon>Pseudomonadati</taxon>
        <taxon>Pseudomonadota</taxon>
        <taxon>Betaproteobacteria</taxon>
        <taxon>Burkholderiales</taxon>
        <taxon>Oxalobacteraceae</taxon>
        <taxon>Herminiimonas</taxon>
    </lineage>
</organism>
<reference key="1">
    <citation type="journal article" date="2007" name="PLoS Genet.">
        <title>A tale of two oxidation states: bacterial colonization of arsenic-rich environments.</title>
        <authorList>
            <person name="Muller D."/>
            <person name="Medigue C."/>
            <person name="Koechler S."/>
            <person name="Barbe V."/>
            <person name="Barakat M."/>
            <person name="Talla E."/>
            <person name="Bonnefoy V."/>
            <person name="Krin E."/>
            <person name="Arsene-Ploetze F."/>
            <person name="Carapito C."/>
            <person name="Chandler M."/>
            <person name="Cournoyer B."/>
            <person name="Cruveiller S."/>
            <person name="Dossat C."/>
            <person name="Duval S."/>
            <person name="Heymann M."/>
            <person name="Leize E."/>
            <person name="Lieutaud A."/>
            <person name="Lievremont D."/>
            <person name="Makita Y."/>
            <person name="Mangenot S."/>
            <person name="Nitschke W."/>
            <person name="Ortet P."/>
            <person name="Perdrial N."/>
            <person name="Schoepp B."/>
            <person name="Siguier P."/>
            <person name="Simeonova D.D."/>
            <person name="Rouy Z."/>
            <person name="Segurens B."/>
            <person name="Turlin E."/>
            <person name="Vallenet D."/>
            <person name="van Dorsselaer A."/>
            <person name="Weiss S."/>
            <person name="Weissenbach J."/>
            <person name="Lett M.-C."/>
            <person name="Danchin A."/>
            <person name="Bertin P.N."/>
        </authorList>
    </citation>
    <scope>NUCLEOTIDE SEQUENCE [LARGE SCALE GENOMIC DNA]</scope>
    <source>
        <strain>ULPAs1</strain>
    </source>
</reference>
<proteinExistence type="inferred from homology"/>
<sequence length="218" mass="23704">MKAFDRPALTAILVEGARGLSLTLSEAQITKLIDYLALMVKWNSVYNLTAVRDPLQMVTQHLLDSLAAVSAFAGAKNVLDVGAGGGLPGIVLAIWAAEAEPEMRVSLIDTVHKKTAFLTQVKAELGLANVSVHTARVEQWNAPHKFDVITSRAFAELNDFVNWSGHLLDEGGEFIALKGVAPDTEVAHLPAGWKVREVRPLQVPTLQAERHLIFIERG</sequence>
<evidence type="ECO:0000255" key="1">
    <source>
        <dbReference type="HAMAP-Rule" id="MF_00074"/>
    </source>
</evidence>
<feature type="chain" id="PRO_0000335362" description="Ribosomal RNA small subunit methyltransferase G">
    <location>
        <begin position="1"/>
        <end position="218"/>
    </location>
</feature>
<feature type="binding site" evidence="1">
    <location>
        <position position="82"/>
    </location>
    <ligand>
        <name>S-adenosyl-L-methionine</name>
        <dbReference type="ChEBI" id="CHEBI:59789"/>
    </ligand>
</feature>
<feature type="binding site" evidence="1">
    <location>
        <position position="87"/>
    </location>
    <ligand>
        <name>S-adenosyl-L-methionine</name>
        <dbReference type="ChEBI" id="CHEBI:59789"/>
    </ligand>
</feature>
<feature type="binding site" evidence="1">
    <location>
        <begin position="137"/>
        <end position="138"/>
    </location>
    <ligand>
        <name>S-adenosyl-L-methionine</name>
        <dbReference type="ChEBI" id="CHEBI:59789"/>
    </ligand>
</feature>
<feature type="binding site" evidence="1">
    <location>
        <position position="152"/>
    </location>
    <ligand>
        <name>S-adenosyl-L-methionine</name>
        <dbReference type="ChEBI" id="CHEBI:59789"/>
    </ligand>
</feature>
<gene>
    <name evidence="1" type="primary">rsmG</name>
    <name type="ordered locus">HEAR3417</name>
</gene>
<protein>
    <recommendedName>
        <fullName evidence="1">Ribosomal RNA small subunit methyltransferase G</fullName>
        <ecNumber evidence="1">2.1.1.170</ecNumber>
    </recommendedName>
    <alternativeName>
        <fullName evidence="1">16S rRNA 7-methylguanosine methyltransferase</fullName>
        <shortName evidence="1">16S rRNA m7G methyltransferase</shortName>
    </alternativeName>
</protein>